<accession>Q6GZM9</accession>
<gene>
    <name type="ORF">FV3-096R</name>
</gene>
<dbReference type="EMBL" id="AY548484">
    <property type="protein sequence ID" value="AAT09756.1"/>
    <property type="molecule type" value="Genomic_DNA"/>
</dbReference>
<dbReference type="RefSeq" id="YP_031675.1">
    <property type="nucleotide sequence ID" value="NC_005946.1"/>
</dbReference>
<dbReference type="KEGG" id="vg:2947789"/>
<dbReference type="Proteomes" id="UP000008770">
    <property type="component" value="Segment"/>
</dbReference>
<dbReference type="InterPro" id="IPR043658">
    <property type="entry name" value="DUF5875"/>
</dbReference>
<dbReference type="Pfam" id="PF19203">
    <property type="entry name" value="DUF5875"/>
    <property type="match status" value="1"/>
</dbReference>
<feature type="chain" id="PRO_0000410542" description="Uncharacterized protein 096R">
    <location>
        <begin position="1"/>
        <end position="223"/>
    </location>
</feature>
<organismHost>
    <name type="scientific">Dryophytes versicolor</name>
    <name type="common">chameleon treefrog</name>
    <dbReference type="NCBI Taxonomy" id="30343"/>
</organismHost>
<organismHost>
    <name type="scientific">Lithobates pipiens</name>
    <name type="common">Northern leopard frog</name>
    <name type="synonym">Rana pipiens</name>
    <dbReference type="NCBI Taxonomy" id="8404"/>
</organismHost>
<organismHost>
    <name type="scientific">Lithobates sylvaticus</name>
    <name type="common">Wood frog</name>
    <name type="synonym">Rana sylvatica</name>
    <dbReference type="NCBI Taxonomy" id="45438"/>
</organismHost>
<organismHost>
    <name type="scientific">Notophthalmus viridescens</name>
    <name type="common">Eastern newt</name>
    <name type="synonym">Triturus viridescens</name>
    <dbReference type="NCBI Taxonomy" id="8316"/>
</organismHost>
<keyword id="KW-1185">Reference proteome</keyword>
<proteinExistence type="predicted"/>
<reference key="1">
    <citation type="journal article" date="2004" name="Virology">
        <title>Comparative genomic analyses of frog virus 3, type species of the genus Ranavirus (family Iridoviridae).</title>
        <authorList>
            <person name="Tan W.G."/>
            <person name="Barkman T.J."/>
            <person name="Gregory Chinchar V."/>
            <person name="Essani K."/>
        </authorList>
    </citation>
    <scope>NUCLEOTIDE SEQUENCE [LARGE SCALE GENOMIC DNA]</scope>
</reference>
<organism>
    <name type="scientific">Frog virus 3 (isolate Goorha)</name>
    <name type="common">FV-3</name>
    <dbReference type="NCBI Taxonomy" id="654924"/>
    <lineage>
        <taxon>Viruses</taxon>
        <taxon>Varidnaviria</taxon>
        <taxon>Bamfordvirae</taxon>
        <taxon>Nucleocytoviricota</taxon>
        <taxon>Megaviricetes</taxon>
        <taxon>Pimascovirales</taxon>
        <taxon>Iridoviridae</taxon>
        <taxon>Alphairidovirinae</taxon>
        <taxon>Ranavirus</taxon>
        <taxon>Frog virus 3</taxon>
    </lineage>
</organism>
<protein>
    <recommendedName>
        <fullName>Uncharacterized protein 096R</fullName>
    </recommendedName>
</protein>
<name>096R_FRG3G</name>
<sequence>MWSQFIAILSQSMPIGVCRKYPVCQTHLKKLKVADLSQESKDSEMAAMTEYISSNRPWGQGSYPSNGYVSPVSGCTLHFGNVSTLHPDSAALDGRLREMAEVLGVQDYASAPVRVSSTGYIDKVKAMVYEIDGVESMSMADLMGCTQLHQLAGKVASDIQSGAINHREFAGEILSNMVGPLRELLPKEDCDSIVSILEKVRDGEAVSADEVFPIITKFQEAGF</sequence>